<protein>
    <recommendedName>
        <fullName>Putative flavin-containing monooxygenase 2</fullName>
        <ecNumber>1.14.13.-</ecNumber>
    </recommendedName>
</protein>
<gene>
    <name type="primary">FMO2</name>
    <name type="ordered locus">At5g45180</name>
    <name type="ORF">K18C1.6</name>
</gene>
<evidence type="ECO:0000250" key="1"/>
<evidence type="ECO:0000250" key="2">
    <source>
        <dbReference type="UniProtKB" id="Q9HFE4"/>
    </source>
</evidence>
<evidence type="ECO:0000305" key="3"/>
<reference key="1">
    <citation type="journal article" date="1998" name="DNA Res.">
        <title>Structural analysis of Arabidopsis thaliana chromosome 5. VI. Sequence features of the regions of 1,367,185 bp covered by 19 physically assigned P1 and TAC clones.</title>
        <authorList>
            <person name="Kotani H."/>
            <person name="Nakamura Y."/>
            <person name="Sato S."/>
            <person name="Asamizu E."/>
            <person name="Kaneko T."/>
            <person name="Miyajima N."/>
            <person name="Tabata S."/>
        </authorList>
    </citation>
    <scope>NUCLEOTIDE SEQUENCE [LARGE SCALE GENOMIC DNA]</scope>
    <source>
        <strain>cv. Columbia</strain>
    </source>
</reference>
<reference key="2">
    <citation type="journal article" date="2017" name="Plant J.">
        <title>Araport11: a complete reannotation of the Arabidopsis thaliana reference genome.</title>
        <authorList>
            <person name="Cheng C.Y."/>
            <person name="Krishnakumar V."/>
            <person name="Chan A.P."/>
            <person name="Thibaud-Nissen F."/>
            <person name="Schobel S."/>
            <person name="Town C.D."/>
        </authorList>
    </citation>
    <scope>GENOME REANNOTATION</scope>
    <source>
        <strain>cv. Columbia</strain>
    </source>
</reference>
<reference key="3">
    <citation type="journal article" date="2007" name="Plant J.">
        <title>Identification of a flavin-monooxygenase as the S-oxygenating enzyme in aliphatic glucosinolate biosynthesis in Arabidopsis.</title>
        <authorList>
            <person name="Hansen B.G."/>
            <person name="Kliebenstein D.J."/>
            <person name="Halkier B.A."/>
        </authorList>
    </citation>
    <scope>GENE FAMILY</scope>
    <source>
        <strain>cv. Columbia</strain>
    </source>
</reference>
<feature type="chain" id="PRO_0000249422" description="Putative flavin-containing monooxygenase 2">
    <location>
        <begin position="1"/>
        <end position="459"/>
    </location>
</feature>
<feature type="binding site" evidence="2">
    <location>
        <begin position="17"/>
        <end position="21"/>
    </location>
    <ligand>
        <name>FAD</name>
        <dbReference type="ChEBI" id="CHEBI:57692"/>
    </ligand>
</feature>
<feature type="binding site" evidence="2">
    <location>
        <position position="38"/>
    </location>
    <ligand>
        <name>FAD</name>
        <dbReference type="ChEBI" id="CHEBI:57692"/>
    </ligand>
</feature>
<feature type="binding site" evidence="2">
    <location>
        <begin position="46"/>
        <end position="47"/>
    </location>
    <ligand>
        <name>FAD</name>
        <dbReference type="ChEBI" id="CHEBI:57692"/>
    </ligand>
</feature>
<feature type="binding site" evidence="2">
    <location>
        <begin position="217"/>
        <end position="220"/>
    </location>
    <ligand>
        <name>NADP(+)</name>
        <dbReference type="ChEBI" id="CHEBI:58349"/>
    </ligand>
</feature>
<name>FMO2_ARATH</name>
<dbReference type="EC" id="1.14.13.-"/>
<dbReference type="EMBL" id="AB012240">
    <property type="protein sequence ID" value="BAB11391.1"/>
    <property type="status" value="ALT_INIT"/>
    <property type="molecule type" value="Genomic_DNA"/>
</dbReference>
<dbReference type="EMBL" id="CP002688">
    <property type="protein sequence ID" value="AED95213.1"/>
    <property type="molecule type" value="Genomic_DNA"/>
</dbReference>
<dbReference type="RefSeq" id="NP_199331.2">
    <property type="nucleotide sequence ID" value="NM_123886.2"/>
</dbReference>
<dbReference type="SMR" id="Q9FKE7"/>
<dbReference type="STRING" id="3702.Q9FKE7"/>
<dbReference type="PaxDb" id="3702-AT5G45180.1"/>
<dbReference type="EnsemblPlants" id="AT5G45180.1">
    <property type="protein sequence ID" value="AT5G45180.1"/>
    <property type="gene ID" value="AT5G45180"/>
</dbReference>
<dbReference type="GeneID" id="834554"/>
<dbReference type="Gramene" id="AT5G45180.1">
    <property type="protein sequence ID" value="AT5G45180.1"/>
    <property type="gene ID" value="AT5G45180"/>
</dbReference>
<dbReference type="KEGG" id="ath:AT5G45180"/>
<dbReference type="Araport" id="AT5G45180"/>
<dbReference type="TAIR" id="AT5G45180"/>
<dbReference type="eggNOG" id="KOG1399">
    <property type="taxonomic scope" value="Eukaryota"/>
</dbReference>
<dbReference type="HOGENOM" id="CLU_006909_9_3_1"/>
<dbReference type="InParanoid" id="Q9FKE7"/>
<dbReference type="OMA" id="DHAFEED"/>
<dbReference type="BioCyc" id="ARA:AT5G45180-MONOMER"/>
<dbReference type="PRO" id="PR:Q9FKE7"/>
<dbReference type="Proteomes" id="UP000006548">
    <property type="component" value="Chromosome 5"/>
</dbReference>
<dbReference type="ExpressionAtlas" id="Q9FKE7">
    <property type="expression patterns" value="baseline and differential"/>
</dbReference>
<dbReference type="GO" id="GO:0050660">
    <property type="term" value="F:flavin adenine dinucleotide binding"/>
    <property type="evidence" value="ECO:0007669"/>
    <property type="project" value="InterPro"/>
</dbReference>
<dbReference type="GO" id="GO:0004499">
    <property type="term" value="F:N,N-dimethylaniline monooxygenase activity"/>
    <property type="evidence" value="ECO:0007669"/>
    <property type="project" value="InterPro"/>
</dbReference>
<dbReference type="GO" id="GO:0050661">
    <property type="term" value="F:NADP binding"/>
    <property type="evidence" value="ECO:0007669"/>
    <property type="project" value="InterPro"/>
</dbReference>
<dbReference type="FunFam" id="3.50.50.60:FF:000167">
    <property type="entry name" value="Flavin-containing monooxygenase"/>
    <property type="match status" value="1"/>
</dbReference>
<dbReference type="Gene3D" id="3.50.50.60">
    <property type="entry name" value="FAD/NAD(P)-binding domain"/>
    <property type="match status" value="1"/>
</dbReference>
<dbReference type="InterPro" id="IPR036188">
    <property type="entry name" value="FAD/NAD-bd_sf"/>
</dbReference>
<dbReference type="InterPro" id="IPR000960">
    <property type="entry name" value="Flavin_mOase"/>
</dbReference>
<dbReference type="InterPro" id="IPR020946">
    <property type="entry name" value="Flavin_mOase-like"/>
</dbReference>
<dbReference type="InterPro" id="IPR050346">
    <property type="entry name" value="FMO-like"/>
</dbReference>
<dbReference type="PANTHER" id="PTHR23023">
    <property type="entry name" value="DIMETHYLANILINE MONOOXYGENASE"/>
    <property type="match status" value="1"/>
</dbReference>
<dbReference type="Pfam" id="PF00743">
    <property type="entry name" value="FMO-like"/>
    <property type="match status" value="2"/>
</dbReference>
<dbReference type="PIRSF" id="PIRSF000332">
    <property type="entry name" value="FMO"/>
    <property type="match status" value="1"/>
</dbReference>
<dbReference type="SUPFAM" id="SSF51905">
    <property type="entry name" value="FAD/NAD(P)-binding domain"/>
    <property type="match status" value="2"/>
</dbReference>
<keyword id="KW-0274">FAD</keyword>
<keyword id="KW-0285">Flavoprotein</keyword>
<keyword id="KW-0503">Monooxygenase</keyword>
<keyword id="KW-0521">NADP</keyword>
<keyword id="KW-0560">Oxidoreductase</keyword>
<keyword id="KW-1185">Reference proteome</keyword>
<comment type="cofactor">
    <cofactor evidence="1">
        <name>FAD</name>
        <dbReference type="ChEBI" id="CHEBI:57692"/>
    </cofactor>
</comment>
<comment type="similarity">
    <text evidence="3">Belongs to the FMO family.</text>
</comment>
<comment type="sequence caution" evidence="3">
    <conflict type="erroneous initiation">
        <sequence resource="EMBL-CDS" id="BAB11391"/>
    </conflict>
    <text>Truncated N-terminus.</text>
</comment>
<proteinExistence type="inferred from homology"/>
<sequence>MAYNYNMHTSSRVAIIGAGVSGLAAAKHLARHHPQVFEASDSIGGVWRKCTYETTKLQSVRVSYELSDFLWPNRGESSFPTYVDVLDYLEAYAKHFNLVKFIKFNSKVVELRFIGDGKTLQMGDLGAYGNLLPGKPVWEVAVNTGDGDIQWHAFEYVVVCAGKYGDVPRTPTFPVKKGPEIFKGKVLHSMDYSKLQKEKASQLLHGKKVAVIGFKKSAIDLALESALANQGKEGKTCTMVVRTPHWVIPHYWRATVSKFIESYVLWKLPLEKYGLKPDHAFEEDYASCQMALVPEKFFEEADKGMIRFKRTTNWWFYDEGIEFEDGTTLEADVVILATGYDGMKKLKAIVPEPFRSWLEFPWGIMPLYRGTIHPLIPNMGFIGYVQSSSNLKSSELHSRWLSQLLDGKFTLPSKEKMLDQFLKEMHVMRRSSRFFKNHCFSTFSIQHADDLSKDMNLKP</sequence>
<accession>Q9FKE7</accession>
<organism>
    <name type="scientific">Arabidopsis thaliana</name>
    <name type="common">Mouse-ear cress</name>
    <dbReference type="NCBI Taxonomy" id="3702"/>
    <lineage>
        <taxon>Eukaryota</taxon>
        <taxon>Viridiplantae</taxon>
        <taxon>Streptophyta</taxon>
        <taxon>Embryophyta</taxon>
        <taxon>Tracheophyta</taxon>
        <taxon>Spermatophyta</taxon>
        <taxon>Magnoliopsida</taxon>
        <taxon>eudicotyledons</taxon>
        <taxon>Gunneridae</taxon>
        <taxon>Pentapetalae</taxon>
        <taxon>rosids</taxon>
        <taxon>malvids</taxon>
        <taxon>Brassicales</taxon>
        <taxon>Brassicaceae</taxon>
        <taxon>Camelineae</taxon>
        <taxon>Arabidopsis</taxon>
    </lineage>
</organism>